<gene>
    <name evidence="1" type="primary">hisZ</name>
    <name type="ordered locus">Rpic_1069</name>
</gene>
<sequence>MPTNWLLPESIADVLPSEARKIEELRRRMLDLFRTYGYELVMPPMLEYIESLLSGTGHDLDLKTFKLVDQLSGRTIGLRADITPQVARIDAHLLNRAGVTRLCYAGSVLHTRPSGFHVTREPLQIGAEIYGHAGLEADLEIQELMLAALSAAGLADVRLDLCHVGVVAALLEQSPIAARIQDDLFTALAAKDVPALRAITVDLPPAQRDAINLLPALYGGVDVLARARKQLPALPAIGRALDDLATLAERAGGATVNIDLADLRGYHYHSGVMFTAYVAGVPNAVARGGRYDKVGEAFGRARPATGFSLDLREVAGISPVEARAAAIHAPWSGDAKLREAIAALRAAGEIVIQSLPGHPEDLEEFAYDRQLVEESGRWIVKPRNASI</sequence>
<accession>B2U9V9</accession>
<reference key="1">
    <citation type="submission" date="2008-05" db="EMBL/GenBank/DDBJ databases">
        <title>Complete sequence of chromosome 1 of Ralstonia pickettii 12J.</title>
        <authorList>
            <person name="Lucas S."/>
            <person name="Copeland A."/>
            <person name="Lapidus A."/>
            <person name="Glavina del Rio T."/>
            <person name="Dalin E."/>
            <person name="Tice H."/>
            <person name="Bruce D."/>
            <person name="Goodwin L."/>
            <person name="Pitluck S."/>
            <person name="Meincke L."/>
            <person name="Brettin T."/>
            <person name="Detter J.C."/>
            <person name="Han C."/>
            <person name="Kuske C.R."/>
            <person name="Schmutz J."/>
            <person name="Larimer F."/>
            <person name="Land M."/>
            <person name="Hauser L."/>
            <person name="Kyrpides N."/>
            <person name="Mikhailova N."/>
            <person name="Marsh T."/>
            <person name="Richardson P."/>
        </authorList>
    </citation>
    <scope>NUCLEOTIDE SEQUENCE [LARGE SCALE GENOMIC DNA]</scope>
    <source>
        <strain>12J</strain>
    </source>
</reference>
<protein>
    <recommendedName>
        <fullName evidence="1">ATP phosphoribosyltransferase regulatory subunit</fullName>
    </recommendedName>
</protein>
<evidence type="ECO:0000255" key="1">
    <source>
        <dbReference type="HAMAP-Rule" id="MF_00125"/>
    </source>
</evidence>
<organism>
    <name type="scientific">Ralstonia pickettii (strain 12J)</name>
    <dbReference type="NCBI Taxonomy" id="402626"/>
    <lineage>
        <taxon>Bacteria</taxon>
        <taxon>Pseudomonadati</taxon>
        <taxon>Pseudomonadota</taxon>
        <taxon>Betaproteobacteria</taxon>
        <taxon>Burkholderiales</taxon>
        <taxon>Burkholderiaceae</taxon>
        <taxon>Ralstonia</taxon>
    </lineage>
</organism>
<comment type="function">
    <text evidence="1">Required for the first step of histidine biosynthesis. May allow the feedback regulation of ATP phosphoribosyltransferase activity by histidine.</text>
</comment>
<comment type="pathway">
    <text evidence="1">Amino-acid biosynthesis; L-histidine biosynthesis; L-histidine from 5-phospho-alpha-D-ribose 1-diphosphate: step 1/9.</text>
</comment>
<comment type="subunit">
    <text evidence="1">Heteromultimer composed of HisG and HisZ subunits.</text>
</comment>
<comment type="subcellular location">
    <subcellularLocation>
        <location evidence="1">Cytoplasm</location>
    </subcellularLocation>
</comment>
<comment type="miscellaneous">
    <text>This function is generally fulfilled by the C-terminal part of HisG, which is missing in some bacteria such as this one.</text>
</comment>
<comment type="similarity">
    <text evidence="1">Belongs to the class-II aminoacyl-tRNA synthetase family. HisZ subfamily.</text>
</comment>
<dbReference type="EMBL" id="CP001068">
    <property type="protein sequence ID" value="ACD26217.1"/>
    <property type="molecule type" value="Genomic_DNA"/>
</dbReference>
<dbReference type="SMR" id="B2U9V9"/>
<dbReference type="STRING" id="402626.Rpic_1069"/>
<dbReference type="KEGG" id="rpi:Rpic_1069"/>
<dbReference type="PATRIC" id="fig|402626.5.peg.2273"/>
<dbReference type="eggNOG" id="COG3705">
    <property type="taxonomic scope" value="Bacteria"/>
</dbReference>
<dbReference type="HOGENOM" id="CLU_025113_0_1_4"/>
<dbReference type="UniPathway" id="UPA00031">
    <property type="reaction ID" value="UER00006"/>
</dbReference>
<dbReference type="GO" id="GO:0005737">
    <property type="term" value="C:cytoplasm"/>
    <property type="evidence" value="ECO:0007669"/>
    <property type="project" value="UniProtKB-SubCell"/>
</dbReference>
<dbReference type="GO" id="GO:0004821">
    <property type="term" value="F:histidine-tRNA ligase activity"/>
    <property type="evidence" value="ECO:0007669"/>
    <property type="project" value="TreeGrafter"/>
</dbReference>
<dbReference type="GO" id="GO:0006427">
    <property type="term" value="P:histidyl-tRNA aminoacylation"/>
    <property type="evidence" value="ECO:0007669"/>
    <property type="project" value="TreeGrafter"/>
</dbReference>
<dbReference type="GO" id="GO:0000105">
    <property type="term" value="P:L-histidine biosynthetic process"/>
    <property type="evidence" value="ECO:0007669"/>
    <property type="project" value="UniProtKB-UniRule"/>
</dbReference>
<dbReference type="CDD" id="cd00773">
    <property type="entry name" value="HisRS-like_core"/>
    <property type="match status" value="1"/>
</dbReference>
<dbReference type="Gene3D" id="3.30.930.10">
    <property type="entry name" value="Bira Bifunctional Protein, Domain 2"/>
    <property type="match status" value="1"/>
</dbReference>
<dbReference type="HAMAP" id="MF_00125">
    <property type="entry name" value="HisZ"/>
    <property type="match status" value="1"/>
</dbReference>
<dbReference type="InterPro" id="IPR045864">
    <property type="entry name" value="aa-tRNA-synth_II/BPL/LPL"/>
</dbReference>
<dbReference type="InterPro" id="IPR041715">
    <property type="entry name" value="HisRS-like_core"/>
</dbReference>
<dbReference type="InterPro" id="IPR004516">
    <property type="entry name" value="HisRS/HisZ"/>
</dbReference>
<dbReference type="InterPro" id="IPR004517">
    <property type="entry name" value="HisZ"/>
</dbReference>
<dbReference type="NCBIfam" id="TIGR00443">
    <property type="entry name" value="hisZ_biosyn_reg"/>
    <property type="match status" value="1"/>
</dbReference>
<dbReference type="NCBIfam" id="NF008935">
    <property type="entry name" value="PRK12292.1-1"/>
    <property type="match status" value="1"/>
</dbReference>
<dbReference type="NCBIfam" id="NF009086">
    <property type="entry name" value="PRK12421.1"/>
    <property type="match status" value="1"/>
</dbReference>
<dbReference type="PANTHER" id="PTHR43707:SF1">
    <property type="entry name" value="HISTIDINE--TRNA LIGASE, MITOCHONDRIAL-RELATED"/>
    <property type="match status" value="1"/>
</dbReference>
<dbReference type="PANTHER" id="PTHR43707">
    <property type="entry name" value="HISTIDYL-TRNA SYNTHETASE"/>
    <property type="match status" value="1"/>
</dbReference>
<dbReference type="Pfam" id="PF13393">
    <property type="entry name" value="tRNA-synt_His"/>
    <property type="match status" value="1"/>
</dbReference>
<dbReference type="SUPFAM" id="SSF55681">
    <property type="entry name" value="Class II aaRS and biotin synthetases"/>
    <property type="match status" value="1"/>
</dbReference>
<name>HISZ_RALPJ</name>
<feature type="chain" id="PRO_1000095468" description="ATP phosphoribosyltransferase regulatory subunit">
    <location>
        <begin position="1"/>
        <end position="387"/>
    </location>
</feature>
<proteinExistence type="inferred from homology"/>
<keyword id="KW-0028">Amino-acid biosynthesis</keyword>
<keyword id="KW-0963">Cytoplasm</keyword>
<keyword id="KW-0368">Histidine biosynthesis</keyword>